<protein>
    <recommendedName>
        <fullName evidence="1">ATP synthase subunit beta 1</fullName>
        <ecNumber evidence="1">7.1.2.2</ecNumber>
    </recommendedName>
    <alternativeName>
        <fullName evidence="1">ATP synthase F1 sector subunit beta 1</fullName>
    </alternativeName>
    <alternativeName>
        <fullName evidence="1">F-ATPase subunit beta 1</fullName>
    </alternativeName>
</protein>
<gene>
    <name evidence="1" type="primary">atpD1</name>
    <name type="ordered locus">BURPS668_3968</name>
</gene>
<comment type="function">
    <text evidence="1">Produces ATP from ADP in the presence of a proton gradient across the membrane. The catalytic sites are hosted primarily by the beta subunits.</text>
</comment>
<comment type="catalytic activity">
    <reaction evidence="1">
        <text>ATP + H2O + 4 H(+)(in) = ADP + phosphate + 5 H(+)(out)</text>
        <dbReference type="Rhea" id="RHEA:57720"/>
        <dbReference type="ChEBI" id="CHEBI:15377"/>
        <dbReference type="ChEBI" id="CHEBI:15378"/>
        <dbReference type="ChEBI" id="CHEBI:30616"/>
        <dbReference type="ChEBI" id="CHEBI:43474"/>
        <dbReference type="ChEBI" id="CHEBI:456216"/>
        <dbReference type="EC" id="7.1.2.2"/>
    </reaction>
</comment>
<comment type="subunit">
    <text evidence="1">F-type ATPases have 2 components, CF(1) - the catalytic core - and CF(0) - the membrane proton channel. CF(1) has five subunits: alpha(3), beta(3), gamma(1), delta(1), epsilon(1). CF(0) has three main subunits: a(1), b(2) and c(9-12). The alpha and beta chains form an alternating ring which encloses part of the gamma chain. CF(1) is attached to CF(0) by a central stalk formed by the gamma and epsilon chains, while a peripheral stalk is formed by the delta and b chains.</text>
</comment>
<comment type="subcellular location">
    <subcellularLocation>
        <location evidence="1">Cell inner membrane</location>
        <topology evidence="1">Peripheral membrane protein</topology>
    </subcellularLocation>
</comment>
<comment type="similarity">
    <text evidence="1">Belongs to the ATPase alpha/beta chains family.</text>
</comment>
<feature type="chain" id="PRO_0000339496" description="ATP synthase subunit beta 1">
    <location>
        <begin position="1"/>
        <end position="464"/>
    </location>
</feature>
<feature type="binding site" evidence="1">
    <location>
        <begin position="153"/>
        <end position="160"/>
    </location>
    <ligand>
        <name>ATP</name>
        <dbReference type="ChEBI" id="CHEBI:30616"/>
    </ligand>
</feature>
<dbReference type="EC" id="7.1.2.2" evidence="1"/>
<dbReference type="EMBL" id="CP000570">
    <property type="protein sequence ID" value="ABN82924.1"/>
    <property type="molecule type" value="Genomic_DNA"/>
</dbReference>
<dbReference type="SMR" id="A3NF40"/>
<dbReference type="KEGG" id="bpd:BURPS668_3968"/>
<dbReference type="HOGENOM" id="CLU_022398_0_2_4"/>
<dbReference type="GO" id="GO:0005886">
    <property type="term" value="C:plasma membrane"/>
    <property type="evidence" value="ECO:0007669"/>
    <property type="project" value="UniProtKB-SubCell"/>
</dbReference>
<dbReference type="GO" id="GO:0045259">
    <property type="term" value="C:proton-transporting ATP synthase complex"/>
    <property type="evidence" value="ECO:0007669"/>
    <property type="project" value="UniProtKB-KW"/>
</dbReference>
<dbReference type="GO" id="GO:0005524">
    <property type="term" value="F:ATP binding"/>
    <property type="evidence" value="ECO:0007669"/>
    <property type="project" value="UniProtKB-UniRule"/>
</dbReference>
<dbReference type="GO" id="GO:0016887">
    <property type="term" value="F:ATP hydrolysis activity"/>
    <property type="evidence" value="ECO:0007669"/>
    <property type="project" value="InterPro"/>
</dbReference>
<dbReference type="GO" id="GO:0046933">
    <property type="term" value="F:proton-transporting ATP synthase activity, rotational mechanism"/>
    <property type="evidence" value="ECO:0007669"/>
    <property type="project" value="UniProtKB-UniRule"/>
</dbReference>
<dbReference type="CDD" id="cd18110">
    <property type="entry name" value="ATP-synt_F1_beta_C"/>
    <property type="match status" value="1"/>
</dbReference>
<dbReference type="CDD" id="cd18115">
    <property type="entry name" value="ATP-synt_F1_beta_N"/>
    <property type="match status" value="1"/>
</dbReference>
<dbReference type="CDD" id="cd01133">
    <property type="entry name" value="F1-ATPase_beta_CD"/>
    <property type="match status" value="1"/>
</dbReference>
<dbReference type="FunFam" id="1.10.1140.10:FF:000001">
    <property type="entry name" value="ATP synthase subunit beta"/>
    <property type="match status" value="1"/>
</dbReference>
<dbReference type="FunFam" id="3.40.50.300:FF:000004">
    <property type="entry name" value="ATP synthase subunit beta"/>
    <property type="match status" value="1"/>
</dbReference>
<dbReference type="Gene3D" id="2.40.10.170">
    <property type="match status" value="1"/>
</dbReference>
<dbReference type="Gene3D" id="1.10.1140.10">
    <property type="entry name" value="Bovine Mitochondrial F1-atpase, Atp Synthase Beta Chain, Chain D, domain 3"/>
    <property type="match status" value="1"/>
</dbReference>
<dbReference type="Gene3D" id="3.40.50.300">
    <property type="entry name" value="P-loop containing nucleotide triphosphate hydrolases"/>
    <property type="match status" value="1"/>
</dbReference>
<dbReference type="HAMAP" id="MF_01347">
    <property type="entry name" value="ATP_synth_beta_bact"/>
    <property type="match status" value="1"/>
</dbReference>
<dbReference type="InterPro" id="IPR003593">
    <property type="entry name" value="AAA+_ATPase"/>
</dbReference>
<dbReference type="InterPro" id="IPR055190">
    <property type="entry name" value="ATP-synt_VA_C"/>
</dbReference>
<dbReference type="InterPro" id="IPR005722">
    <property type="entry name" value="ATP_synth_F1_bsu"/>
</dbReference>
<dbReference type="InterPro" id="IPR020003">
    <property type="entry name" value="ATPase_a/bsu_AS"/>
</dbReference>
<dbReference type="InterPro" id="IPR050053">
    <property type="entry name" value="ATPase_alpha/beta_chains"/>
</dbReference>
<dbReference type="InterPro" id="IPR004100">
    <property type="entry name" value="ATPase_F1/V1/A1_a/bsu_N"/>
</dbReference>
<dbReference type="InterPro" id="IPR036121">
    <property type="entry name" value="ATPase_F1/V1/A1_a/bsu_N_sf"/>
</dbReference>
<dbReference type="InterPro" id="IPR000194">
    <property type="entry name" value="ATPase_F1/V1/A1_a/bsu_nucl-bd"/>
</dbReference>
<dbReference type="InterPro" id="IPR024034">
    <property type="entry name" value="ATPase_F1/V1_b/a_C"/>
</dbReference>
<dbReference type="InterPro" id="IPR027417">
    <property type="entry name" value="P-loop_NTPase"/>
</dbReference>
<dbReference type="NCBIfam" id="TIGR01039">
    <property type="entry name" value="atpD"/>
    <property type="match status" value="1"/>
</dbReference>
<dbReference type="PANTHER" id="PTHR15184">
    <property type="entry name" value="ATP SYNTHASE"/>
    <property type="match status" value="1"/>
</dbReference>
<dbReference type="PANTHER" id="PTHR15184:SF71">
    <property type="entry name" value="ATP SYNTHASE SUBUNIT BETA, MITOCHONDRIAL"/>
    <property type="match status" value="1"/>
</dbReference>
<dbReference type="Pfam" id="PF00006">
    <property type="entry name" value="ATP-synt_ab"/>
    <property type="match status" value="1"/>
</dbReference>
<dbReference type="Pfam" id="PF02874">
    <property type="entry name" value="ATP-synt_ab_N"/>
    <property type="match status" value="1"/>
</dbReference>
<dbReference type="Pfam" id="PF22919">
    <property type="entry name" value="ATP-synt_VA_C"/>
    <property type="match status" value="1"/>
</dbReference>
<dbReference type="SMART" id="SM00382">
    <property type="entry name" value="AAA"/>
    <property type="match status" value="1"/>
</dbReference>
<dbReference type="SUPFAM" id="SSF47917">
    <property type="entry name" value="C-terminal domain of alpha and beta subunits of F1 ATP synthase"/>
    <property type="match status" value="1"/>
</dbReference>
<dbReference type="SUPFAM" id="SSF50615">
    <property type="entry name" value="N-terminal domain of alpha and beta subunits of F1 ATP synthase"/>
    <property type="match status" value="1"/>
</dbReference>
<dbReference type="SUPFAM" id="SSF52540">
    <property type="entry name" value="P-loop containing nucleoside triphosphate hydrolases"/>
    <property type="match status" value="1"/>
</dbReference>
<dbReference type="PROSITE" id="PS00152">
    <property type="entry name" value="ATPASE_ALPHA_BETA"/>
    <property type="match status" value="1"/>
</dbReference>
<name>ATPB1_BURP6</name>
<evidence type="ECO:0000255" key="1">
    <source>
        <dbReference type="HAMAP-Rule" id="MF_01347"/>
    </source>
</evidence>
<proteinExistence type="inferred from homology"/>
<sequence length="464" mass="50623">MSTAALVEGKIVQCIGAVIDVEFPRESMPKIYDALILEGSELTLEVQQQLGDGVVRTICLGASDGLRRGVVVKNTGNPISVPVGKPTLGRIMDVLGRPIDEAGPIESENKRSIHQKAPAFDELSPSTELLETGIKVIDLICPFAKGGKVGLFGGAGVGKTVNMMELINNIAKEHGGYSVFAGVGERTREGNDFYHEMKDSNVLDKVALVYGQMNEPPGNRLRVALTGLTMAEHFRDEGLDVLFFVDNIYRFTLAGTEVSALLGRMPSAVGYQPTLAEEMGKLQERITSTKKGSITSVQAVYVPADDLTDPSPATTFGHLDATVVLSRDIASLGIYPAVDPLDSTSRQIDPNVIGEEHYSITRRVQQTLQRYKELRDIIAILGMDELSPEDKLSVARARKIQRFLSQPFHVAEVFTGSPGKYVPLKETIRGFKMIVDGECDHLPEQAFYMVGTIDEAFEKAKKIQ</sequence>
<accession>A3NF40</accession>
<reference key="1">
    <citation type="journal article" date="2010" name="Genome Biol. Evol.">
        <title>Continuing evolution of Burkholderia mallei through genome reduction and large-scale rearrangements.</title>
        <authorList>
            <person name="Losada L."/>
            <person name="Ronning C.M."/>
            <person name="DeShazer D."/>
            <person name="Woods D."/>
            <person name="Fedorova N."/>
            <person name="Kim H.S."/>
            <person name="Shabalina S.A."/>
            <person name="Pearson T.R."/>
            <person name="Brinkac L."/>
            <person name="Tan P."/>
            <person name="Nandi T."/>
            <person name="Crabtree J."/>
            <person name="Badger J."/>
            <person name="Beckstrom-Sternberg S."/>
            <person name="Saqib M."/>
            <person name="Schutzer S.E."/>
            <person name="Keim P."/>
            <person name="Nierman W.C."/>
        </authorList>
    </citation>
    <scope>NUCLEOTIDE SEQUENCE [LARGE SCALE GENOMIC DNA]</scope>
    <source>
        <strain>668</strain>
    </source>
</reference>
<keyword id="KW-0066">ATP synthesis</keyword>
<keyword id="KW-0067">ATP-binding</keyword>
<keyword id="KW-0997">Cell inner membrane</keyword>
<keyword id="KW-1003">Cell membrane</keyword>
<keyword id="KW-0139">CF(1)</keyword>
<keyword id="KW-0375">Hydrogen ion transport</keyword>
<keyword id="KW-0406">Ion transport</keyword>
<keyword id="KW-0472">Membrane</keyword>
<keyword id="KW-0547">Nucleotide-binding</keyword>
<keyword id="KW-1278">Translocase</keyword>
<keyword id="KW-0813">Transport</keyword>
<organism>
    <name type="scientific">Burkholderia pseudomallei (strain 668)</name>
    <dbReference type="NCBI Taxonomy" id="320373"/>
    <lineage>
        <taxon>Bacteria</taxon>
        <taxon>Pseudomonadati</taxon>
        <taxon>Pseudomonadota</taxon>
        <taxon>Betaproteobacteria</taxon>
        <taxon>Burkholderiales</taxon>
        <taxon>Burkholderiaceae</taxon>
        <taxon>Burkholderia</taxon>
        <taxon>pseudomallei group</taxon>
    </lineage>
</organism>